<feature type="chain" id="PRO_0000197300" description="Metallothionein A">
    <location>
        <begin position="1"/>
        <end position="60"/>
    </location>
</feature>
<feature type="region of interest" description="Beta">
    <location>
        <begin position="1"/>
        <end position="28"/>
    </location>
</feature>
<feature type="region of interest" description="Alpha">
    <location>
        <begin position="29"/>
        <end position="60"/>
    </location>
</feature>
<feature type="binding site" evidence="2">
    <location>
        <position position="4"/>
    </location>
    <ligand>
        <name>a divalent metal cation</name>
        <dbReference type="ChEBI" id="CHEBI:60240"/>
        <label>1</label>
        <note>in cluster B</note>
    </ligand>
</feature>
<feature type="binding site" evidence="2">
    <location>
        <position position="6"/>
    </location>
    <ligand>
        <name>a divalent metal cation</name>
        <dbReference type="ChEBI" id="CHEBI:60240"/>
        <label>1</label>
        <note>in cluster B</note>
    </ligand>
</feature>
<feature type="binding site" evidence="2">
    <location>
        <position position="6"/>
    </location>
    <ligand>
        <name>a divalent metal cation</name>
        <dbReference type="ChEBI" id="CHEBI:60240"/>
        <label>2</label>
        <note>in cluster B</note>
    </ligand>
</feature>
<feature type="binding site" evidence="2">
    <location>
        <position position="12"/>
    </location>
    <ligand>
        <name>a divalent metal cation</name>
        <dbReference type="ChEBI" id="CHEBI:60240"/>
        <label>2</label>
        <note>in cluster B</note>
    </ligand>
</feature>
<feature type="binding site" evidence="2">
    <location>
        <position position="14"/>
    </location>
    <ligand>
        <name>a divalent metal cation</name>
        <dbReference type="ChEBI" id="CHEBI:60240"/>
        <label>2</label>
        <note>in cluster B</note>
    </ligand>
</feature>
<feature type="binding site" evidence="2">
    <location>
        <position position="14"/>
    </location>
    <ligand>
        <name>a divalent metal cation</name>
        <dbReference type="ChEBI" id="CHEBI:60240"/>
        <label>3</label>
        <note>in cluster B</note>
    </ligand>
</feature>
<feature type="binding site" evidence="2">
    <location>
        <position position="18"/>
    </location>
    <ligand>
        <name>a divalent metal cation</name>
        <dbReference type="ChEBI" id="CHEBI:60240"/>
        <label>3</label>
        <note>in cluster B</note>
    </ligand>
</feature>
<feature type="binding site" evidence="2">
    <location>
        <position position="20"/>
    </location>
    <ligand>
        <name>a divalent metal cation</name>
        <dbReference type="ChEBI" id="CHEBI:60240"/>
        <label>1</label>
        <note>in cluster B</note>
    </ligand>
</feature>
<feature type="binding site" evidence="2">
    <location>
        <position position="23"/>
    </location>
    <ligand>
        <name>a divalent metal cation</name>
        <dbReference type="ChEBI" id="CHEBI:60240"/>
        <label>1</label>
        <note>in cluster B</note>
    </ligand>
</feature>
<feature type="binding site" evidence="2">
    <location>
        <position position="23"/>
    </location>
    <ligand>
        <name>a divalent metal cation</name>
        <dbReference type="ChEBI" id="CHEBI:60240"/>
        <label>3</label>
        <note>in cluster B</note>
    </ligand>
</feature>
<feature type="binding site" evidence="2">
    <location>
        <position position="25"/>
    </location>
    <ligand>
        <name>a divalent metal cation</name>
        <dbReference type="ChEBI" id="CHEBI:60240"/>
        <label>2</label>
        <note>in cluster B</note>
    </ligand>
</feature>
<feature type="binding site" evidence="2">
    <location>
        <position position="28"/>
    </location>
    <ligand>
        <name>a divalent metal cation</name>
        <dbReference type="ChEBI" id="CHEBI:60240"/>
        <label>3</label>
        <note>in cluster B</note>
    </ligand>
</feature>
<feature type="binding site" evidence="2">
    <location>
        <position position="32"/>
    </location>
    <ligand>
        <name>a divalent metal cation</name>
        <dbReference type="ChEBI" id="CHEBI:60240"/>
        <label>4</label>
        <note>in cluster A</note>
    </ligand>
</feature>
<feature type="binding site" evidence="2">
    <location>
        <position position="33"/>
    </location>
    <ligand>
        <name>a divalent metal cation</name>
        <dbReference type="ChEBI" id="CHEBI:60240"/>
        <label>4</label>
        <note>in cluster A</note>
    </ligand>
</feature>
<feature type="binding site" evidence="2">
    <location>
        <position position="33"/>
    </location>
    <ligand>
        <name>a divalent metal cation</name>
        <dbReference type="ChEBI" id="CHEBI:60240"/>
        <label>5</label>
        <note>in cluster A</note>
    </ligand>
</feature>
<feature type="binding site" evidence="2">
    <location>
        <position position="35"/>
    </location>
    <ligand>
        <name>a divalent metal cation</name>
        <dbReference type="ChEBI" id="CHEBI:60240"/>
        <label>5</label>
        <note>in cluster A</note>
    </ligand>
</feature>
<feature type="binding site" evidence="2">
    <location>
        <position position="36"/>
    </location>
    <ligand>
        <name>a divalent metal cation</name>
        <dbReference type="ChEBI" id="CHEBI:60240"/>
        <label>5</label>
        <note>in cluster A</note>
    </ligand>
</feature>
<feature type="binding site" evidence="2">
    <location>
        <position position="36"/>
    </location>
    <ligand>
        <name>a divalent metal cation</name>
        <dbReference type="ChEBI" id="CHEBI:60240"/>
        <label>6</label>
        <note>in cluster A</note>
    </ligand>
</feature>
<feature type="binding site" evidence="2">
    <location>
        <position position="40"/>
    </location>
    <ligand>
        <name>a divalent metal cation</name>
        <dbReference type="ChEBI" id="CHEBI:60240"/>
        <label>6</label>
        <note>in cluster A</note>
    </ligand>
</feature>
<feature type="binding site" evidence="2">
    <location>
        <position position="43"/>
    </location>
    <ligand>
        <name>a divalent metal cation</name>
        <dbReference type="ChEBI" id="CHEBI:60240"/>
        <label>4</label>
        <note>in cluster A</note>
    </ligand>
</feature>
<feature type="binding site" evidence="2">
    <location>
        <position position="43"/>
    </location>
    <ligand>
        <name>a divalent metal cation</name>
        <dbReference type="ChEBI" id="CHEBI:60240"/>
        <label>6</label>
        <note>in cluster A</note>
    </ligand>
</feature>
<feature type="binding site" evidence="2">
    <location>
        <position position="47"/>
    </location>
    <ligand>
        <name>a divalent metal cation</name>
        <dbReference type="ChEBI" id="CHEBI:60240"/>
        <label>4</label>
        <note>in cluster A</note>
    </ligand>
</feature>
<feature type="binding site" evidence="2">
    <location>
        <position position="49"/>
    </location>
    <ligand>
        <name>a divalent metal cation</name>
        <dbReference type="ChEBI" id="CHEBI:60240"/>
        <label>5</label>
        <note>in cluster A</note>
    </ligand>
</feature>
<feature type="binding site" evidence="2">
    <location>
        <position position="49"/>
    </location>
    <ligand>
        <name>a divalent metal cation</name>
        <dbReference type="ChEBI" id="CHEBI:60240"/>
        <label>7</label>
        <note>in cluster A</note>
    </ligand>
</feature>
<feature type="binding site" evidence="3">
    <location>
        <position position="54"/>
    </location>
    <ligand>
        <name>a divalent metal cation</name>
        <dbReference type="ChEBI" id="CHEBI:60240"/>
        <label>7</label>
        <note>in cluster A</note>
    </ligand>
</feature>
<feature type="binding site" evidence="2">
    <location>
        <position position="58"/>
    </location>
    <ligand>
        <name>a divalent metal cation</name>
        <dbReference type="ChEBI" id="CHEBI:60240"/>
        <label>7</label>
        <note>in cluster A</note>
    </ligand>
</feature>
<feature type="binding site" evidence="2">
    <location>
        <position position="59"/>
    </location>
    <ligand>
        <name>a divalent metal cation</name>
        <dbReference type="ChEBI" id="CHEBI:60240"/>
        <label>6</label>
        <note>in cluster A</note>
    </ligand>
</feature>
<feature type="binding site" evidence="2">
    <location>
        <position position="59"/>
    </location>
    <ligand>
        <name>a divalent metal cation</name>
        <dbReference type="ChEBI" id="CHEBI:60240"/>
        <label>7</label>
        <note>in cluster A</note>
    </ligand>
</feature>
<gene>
    <name type="primary">mta</name>
</gene>
<organism>
    <name type="scientific">Trematomus bernacchii</name>
    <name type="common">Emerald rockcod</name>
    <name type="synonym">Pseudotrematomus bernacchii</name>
    <dbReference type="NCBI Taxonomy" id="40690"/>
    <lineage>
        <taxon>Eukaryota</taxon>
        <taxon>Metazoa</taxon>
        <taxon>Chordata</taxon>
        <taxon>Craniata</taxon>
        <taxon>Vertebrata</taxon>
        <taxon>Euteleostomi</taxon>
        <taxon>Actinopterygii</taxon>
        <taxon>Neopterygii</taxon>
        <taxon>Teleostei</taxon>
        <taxon>Neoteleostei</taxon>
        <taxon>Acanthomorphata</taxon>
        <taxon>Eupercaria</taxon>
        <taxon>Perciformes</taxon>
        <taxon>Notothenioidei</taxon>
        <taxon>Nototheniidae</taxon>
        <taxon>Trematomus</taxon>
    </lineage>
</organism>
<comment type="function">
    <text evidence="1">Metallothioneins have a high content of cysteine residues that bind various heavy metals.</text>
</comment>
<comment type="domain">
    <text>Class I metallothioneins contain 2 metal-binding domains: four divalent ions are chelated within cluster A of the alpha domain and are coordinated via cysteinyl thiolate bridges to 11 cysteine ligands. Cluster B, the corresponding region within the beta domain, can ligate three divalent ions to 9 cysteines.</text>
</comment>
<comment type="similarity">
    <text evidence="4">Belongs to the metallothionein superfamily. Type 1 family.</text>
</comment>
<sequence>MDPCQCSKSGTCNCGGSCTCTNCSCKSCKKSCCPCCPSGCTKCASGCVCKGKTCDTSCCQ</sequence>
<accession>O93609</accession>
<dbReference type="EMBL" id="AJ011585">
    <property type="protein sequence ID" value="CAA09715.1"/>
    <property type="molecule type" value="mRNA"/>
</dbReference>
<dbReference type="SMR" id="O93609"/>
<dbReference type="GO" id="GO:0046872">
    <property type="term" value="F:metal ion binding"/>
    <property type="evidence" value="ECO:0007669"/>
    <property type="project" value="UniProtKB-KW"/>
</dbReference>
<dbReference type="FunFam" id="4.10.10.10:FF:000001">
    <property type="entry name" value="Metallothionein"/>
    <property type="match status" value="1"/>
</dbReference>
<dbReference type="Gene3D" id="4.10.10.10">
    <property type="entry name" value="Metallothionein Isoform II"/>
    <property type="match status" value="1"/>
</dbReference>
<dbReference type="InterPro" id="IPR017854">
    <property type="entry name" value="Metalthion_dom_sf"/>
</dbReference>
<dbReference type="InterPro" id="IPR023587">
    <property type="entry name" value="Metalthion_dom_sf_vert"/>
</dbReference>
<dbReference type="InterPro" id="IPR000006">
    <property type="entry name" value="Metalthion_vert"/>
</dbReference>
<dbReference type="InterPro" id="IPR018064">
    <property type="entry name" value="Metalthion_vert_metal_BS"/>
</dbReference>
<dbReference type="PANTHER" id="PTHR23299">
    <property type="entry name" value="METALLOTHIONEIN"/>
    <property type="match status" value="1"/>
</dbReference>
<dbReference type="PANTHER" id="PTHR23299:SF24">
    <property type="entry name" value="METALLOTHIONEIN-1X"/>
    <property type="match status" value="1"/>
</dbReference>
<dbReference type="Pfam" id="PF00131">
    <property type="entry name" value="Metallothio"/>
    <property type="match status" value="1"/>
</dbReference>
<dbReference type="PRINTS" id="PR00860">
    <property type="entry name" value="MTVERTEBRATE"/>
</dbReference>
<dbReference type="SUPFAM" id="SSF57868">
    <property type="entry name" value="Metallothionein"/>
    <property type="match status" value="1"/>
</dbReference>
<dbReference type="PROSITE" id="PS00203">
    <property type="entry name" value="METALLOTHIONEIN_VRT"/>
    <property type="match status" value="1"/>
</dbReference>
<proteinExistence type="inferred from homology"/>
<evidence type="ECO:0000250" key="1"/>
<evidence type="ECO:0000250" key="2">
    <source>
        <dbReference type="UniProtKB" id="P02795"/>
    </source>
</evidence>
<evidence type="ECO:0000250" key="3">
    <source>
        <dbReference type="UniProtKB" id="P62339"/>
    </source>
</evidence>
<evidence type="ECO:0000305" key="4"/>
<protein>
    <recommendedName>
        <fullName>Metallothionein A</fullName>
        <shortName>MT-A</shortName>
        <shortName>MT-I</shortName>
    </recommendedName>
</protein>
<reference key="1">
    <citation type="journal article" date="1999" name="Mol. Biol. Evol.">
        <title>Metallothioneins in antarctic fish: evidence for independent duplication and gene conversion.</title>
        <authorList>
            <person name="Bargelloni L."/>
            <person name="Scudiero R."/>
            <person name="Parisi E."/>
            <person name="Carginale V."/>
            <person name="Capasso C."/>
            <person name="Patarnello T."/>
        </authorList>
    </citation>
    <scope>NUCLEOTIDE SEQUENCE [MRNA]</scope>
    <source>
        <tissue>Liver</tissue>
    </source>
</reference>
<keyword id="KW-0479">Metal-binding</keyword>
<keyword id="KW-0480">Metal-thiolate cluster</keyword>
<keyword id="KW-0862">Zinc</keyword>
<name>MTA_TREBE</name>